<dbReference type="EC" id="3.6.5.-"/>
<dbReference type="EMBL" id="AY849636">
    <property type="protein sequence ID" value="AAX07657.1"/>
    <property type="molecule type" value="mRNA"/>
</dbReference>
<dbReference type="EMBL" id="JH793327">
    <property type="protein sequence ID" value="ELQ44171.1"/>
    <property type="status" value="ALT_SEQ"/>
    <property type="molecule type" value="Genomic_DNA"/>
</dbReference>
<dbReference type="SMR" id="P0CT17"/>
<dbReference type="OrthoDB" id="663956at147550"/>
<dbReference type="Proteomes" id="UP000011086">
    <property type="component" value="Unassembled WGS sequence"/>
</dbReference>
<dbReference type="GO" id="GO:0005789">
    <property type="term" value="C:endoplasmic reticulum membrane"/>
    <property type="evidence" value="ECO:0007669"/>
    <property type="project" value="UniProtKB-SubCell"/>
</dbReference>
<dbReference type="GO" id="GO:0012507">
    <property type="term" value="C:ER to Golgi transport vesicle membrane"/>
    <property type="evidence" value="ECO:0007669"/>
    <property type="project" value="UniProtKB-SubCell"/>
</dbReference>
<dbReference type="GO" id="GO:0000139">
    <property type="term" value="C:Golgi membrane"/>
    <property type="evidence" value="ECO:0007669"/>
    <property type="project" value="UniProtKB-SubCell"/>
</dbReference>
<dbReference type="GO" id="GO:0005525">
    <property type="term" value="F:GTP binding"/>
    <property type="evidence" value="ECO:0007669"/>
    <property type="project" value="UniProtKB-KW"/>
</dbReference>
<dbReference type="GO" id="GO:0003924">
    <property type="term" value="F:GTPase activity"/>
    <property type="evidence" value="ECO:0007669"/>
    <property type="project" value="InterPro"/>
</dbReference>
<dbReference type="GO" id="GO:0006886">
    <property type="term" value="P:intracellular protein transport"/>
    <property type="evidence" value="ECO:0007669"/>
    <property type="project" value="InterPro"/>
</dbReference>
<dbReference type="GO" id="GO:0016192">
    <property type="term" value="P:vesicle-mediated transport"/>
    <property type="evidence" value="ECO:0007669"/>
    <property type="project" value="UniProtKB-KW"/>
</dbReference>
<dbReference type="CDD" id="cd00879">
    <property type="entry name" value="Sar1"/>
    <property type="match status" value="1"/>
</dbReference>
<dbReference type="FunFam" id="3.40.50.300:FF:000161">
    <property type="entry name" value="Small COPII coat GTPase"/>
    <property type="match status" value="1"/>
</dbReference>
<dbReference type="Gene3D" id="3.40.50.300">
    <property type="entry name" value="P-loop containing nucleotide triphosphate hydrolases"/>
    <property type="match status" value="1"/>
</dbReference>
<dbReference type="InterPro" id="IPR027417">
    <property type="entry name" value="P-loop_NTPase"/>
</dbReference>
<dbReference type="InterPro" id="IPR005225">
    <property type="entry name" value="Small_GTP-bd"/>
</dbReference>
<dbReference type="InterPro" id="IPR006689">
    <property type="entry name" value="Small_GTPase_ARF/SAR"/>
</dbReference>
<dbReference type="InterPro" id="IPR006687">
    <property type="entry name" value="Small_GTPase_SAR1"/>
</dbReference>
<dbReference type="NCBIfam" id="TIGR00231">
    <property type="entry name" value="small_GTP"/>
    <property type="match status" value="1"/>
</dbReference>
<dbReference type="PANTHER" id="PTHR45684">
    <property type="entry name" value="RE74312P"/>
    <property type="match status" value="1"/>
</dbReference>
<dbReference type="Pfam" id="PF00025">
    <property type="entry name" value="Arf"/>
    <property type="match status" value="1"/>
</dbReference>
<dbReference type="PRINTS" id="PR00328">
    <property type="entry name" value="SAR1GTPBP"/>
</dbReference>
<dbReference type="SMART" id="SM00177">
    <property type="entry name" value="ARF"/>
    <property type="match status" value="1"/>
</dbReference>
<dbReference type="SMART" id="SM00178">
    <property type="entry name" value="SAR"/>
    <property type="match status" value="1"/>
</dbReference>
<dbReference type="SUPFAM" id="SSF52540">
    <property type="entry name" value="P-loop containing nucleoside triphosphate hydrolases"/>
    <property type="match status" value="1"/>
</dbReference>
<dbReference type="PROSITE" id="PS51422">
    <property type="entry name" value="SAR1"/>
    <property type="match status" value="1"/>
</dbReference>
<proteinExistence type="evidence at transcript level"/>
<organism>
    <name type="scientific">Pyricularia oryzae (strain Y34)</name>
    <name type="common">Rice blast fungus</name>
    <name type="synonym">Magnaporthe oryzae</name>
    <dbReference type="NCBI Taxonomy" id="1143189"/>
    <lineage>
        <taxon>Eukaryota</taxon>
        <taxon>Fungi</taxon>
        <taxon>Dikarya</taxon>
        <taxon>Ascomycota</taxon>
        <taxon>Pezizomycotina</taxon>
        <taxon>Sordariomycetes</taxon>
        <taxon>Sordariomycetidae</taxon>
        <taxon>Magnaporthales</taxon>
        <taxon>Pyriculariaceae</taxon>
        <taxon>Pyricularia</taxon>
    </lineage>
</organism>
<protein>
    <recommendedName>
        <fullName>Small COPII coat GTPase SAR1</fullName>
        <ecNumber>3.6.5.-</ecNumber>
    </recommendedName>
</protein>
<name>SAR1_PYRO3</name>
<reference key="1">
    <citation type="submission" date="2004-12" db="EMBL/GenBank/DDBJ databases">
        <authorList>
            <person name="Dong H.T."/>
            <person name="Peng Y.L."/>
            <person name="Chen B.S."/>
            <person name="Li Y.Z."/>
            <person name="Li D.B."/>
        </authorList>
    </citation>
    <scope>NUCLEOTIDE SEQUENCE [MRNA]</scope>
    <source>
        <strain>Y34</strain>
        <tissue>Conidium</tissue>
    </source>
</reference>
<reference key="2">
    <citation type="journal article" date="2012" name="PLoS Genet.">
        <title>Comparative analysis of the genomes of two field isolates of the rice blast fungus Magnaporthe oryzae.</title>
        <authorList>
            <person name="Xue M."/>
            <person name="Yang J."/>
            <person name="Li Z."/>
            <person name="Hu S."/>
            <person name="Yao N."/>
            <person name="Dean R.A."/>
            <person name="Zhao W."/>
            <person name="Shen M."/>
            <person name="Zhang H."/>
            <person name="Li C."/>
            <person name="Liu L."/>
            <person name="Cao L."/>
            <person name="Xu X."/>
            <person name="Xing Y."/>
            <person name="Hsiang T."/>
            <person name="Zhang Z."/>
            <person name="Xu J.-R."/>
            <person name="Peng Y.-L."/>
        </authorList>
    </citation>
    <scope>NUCLEOTIDE SEQUENCE [LARGE SCALE GENOMIC DNA]</scope>
    <source>
        <strain>Y34</strain>
    </source>
</reference>
<gene>
    <name type="primary">SAR1</name>
    <name type="ORF">OOU_Y34scaffold00095g16.2</name>
</gene>
<comment type="function">
    <text evidence="1">Small GTPase component of the coat protein complex II (COPII) which promotes the formation of transport vesicles from the endoplasmic reticulum (ER). The coat has two main functions, the physical deformation of the endoplasmic reticulum membrane into vesicles and the selection of cargo molecules. SAR1 controls the coat assembly in a stepwise manner. Activated SAR1-GTP binds to membranes first and recruits the SEC23/24 complex. These SEC23/24-SAR1 prebudding intermediates are then collected by the SEC13/31 complex as subunits polymerize to form coated transport vesicles. Conversion to SAR1-GDP triggers coat release and recycles COPII subunits (By similarity).</text>
</comment>
<comment type="catalytic activity">
    <reaction>
        <text>GTP + H2O = GDP + phosphate + H(+)</text>
        <dbReference type="Rhea" id="RHEA:19669"/>
        <dbReference type="ChEBI" id="CHEBI:15377"/>
        <dbReference type="ChEBI" id="CHEBI:15378"/>
        <dbReference type="ChEBI" id="CHEBI:37565"/>
        <dbReference type="ChEBI" id="CHEBI:43474"/>
        <dbReference type="ChEBI" id="CHEBI:58189"/>
    </reaction>
</comment>
<comment type="subunit">
    <text evidence="1">COPII is composed of at least 5 proteins: the SEC23/24 complex, the SEC13/31 complex and SAR1.</text>
</comment>
<comment type="subcellular location">
    <subcellularLocation>
        <location evidence="1">Cytoplasmic vesicle</location>
        <location evidence="1">COPII-coated vesicle membrane</location>
        <topology evidence="1">Peripheral membrane protein</topology>
        <orientation evidence="1">Cytoplasmic side</orientation>
    </subcellularLocation>
    <subcellularLocation>
        <location evidence="1">Endoplasmic reticulum membrane</location>
        <topology evidence="1">Peripheral membrane protein</topology>
        <orientation evidence="1">Cytoplasmic side</orientation>
    </subcellularLocation>
    <subcellularLocation>
        <location evidence="1">Golgi apparatus membrane</location>
        <topology evidence="1">Peripheral membrane protein</topology>
        <orientation evidence="1">Cytoplasmic side</orientation>
    </subcellularLocation>
</comment>
<comment type="similarity">
    <text evidence="2">Belongs to the small GTPase superfamily. SAR1 family.</text>
</comment>
<comment type="sequence caution" evidence="2">
    <conflict type="erroneous gene model prediction">
        <sequence resource="EMBL-CDS" id="ELQ44171"/>
    </conflict>
    <text>The predicted gene OOU_Y34scaffold00095g16 has been split into 3 genes: OOU_Y34scaffold00095g16.1, OOU_Y34scaffold00095g16.2 and OOU_Y34scaffold00095g16.3.</text>
</comment>
<sequence length="189" mass="21514">MWIINWFYDVLSSLGLLNKHAKLLFLGLDNAGKTTLLHMLKNDRVAILQPTLHPTSEELAIGNVRFTTFDLGGHQQARRLWKDYFPEVNGIVFLVDAKDHDRFPEAKAELDALLSMEELAKVPFVILGNKIDHPEAISEEELRHQLGLYQTTGKGKVPLEGIRPIEVFMCSVVMRQGYGEGIRWLSQYV</sequence>
<feature type="chain" id="PRO_0000423550" description="Small COPII coat GTPase SAR1">
    <location>
        <begin position="1"/>
        <end position="189"/>
    </location>
</feature>
<feature type="binding site" evidence="1">
    <location>
        <begin position="27"/>
        <end position="34"/>
    </location>
    <ligand>
        <name>GTP</name>
        <dbReference type="ChEBI" id="CHEBI:37565"/>
    </ligand>
</feature>
<feature type="binding site" evidence="1">
    <location>
        <begin position="70"/>
        <end position="73"/>
    </location>
    <ligand>
        <name>GTP</name>
        <dbReference type="ChEBI" id="CHEBI:37565"/>
    </ligand>
</feature>
<feature type="binding site" evidence="1">
    <location>
        <begin position="129"/>
        <end position="132"/>
    </location>
    <ligand>
        <name>GTP</name>
        <dbReference type="ChEBI" id="CHEBI:37565"/>
    </ligand>
</feature>
<accession>P0CT17</accession>
<accession>G4N7U2</accession>
<accession>L7IMP3</accession>
<accession>Q5EMZ6</accession>
<keyword id="KW-0968">Cytoplasmic vesicle</keyword>
<keyword id="KW-0256">Endoplasmic reticulum</keyword>
<keyword id="KW-0931">ER-Golgi transport</keyword>
<keyword id="KW-0333">Golgi apparatus</keyword>
<keyword id="KW-0342">GTP-binding</keyword>
<keyword id="KW-0378">Hydrolase</keyword>
<keyword id="KW-0472">Membrane</keyword>
<keyword id="KW-0547">Nucleotide-binding</keyword>
<keyword id="KW-0653">Protein transport</keyword>
<keyword id="KW-0813">Transport</keyword>
<evidence type="ECO:0000250" key="1"/>
<evidence type="ECO:0000305" key="2"/>